<name>DPO3B_ACTPL</name>
<organism>
    <name type="scientific">Actinobacillus pleuropneumoniae</name>
    <name type="common">Haemophilus pleuropneumoniae</name>
    <dbReference type="NCBI Taxonomy" id="715"/>
    <lineage>
        <taxon>Bacteria</taxon>
        <taxon>Pseudomonadati</taxon>
        <taxon>Pseudomonadota</taxon>
        <taxon>Gammaproteobacteria</taxon>
        <taxon>Pasteurellales</taxon>
        <taxon>Pasteurellaceae</taxon>
        <taxon>Actinobacillus</taxon>
    </lineage>
</organism>
<gene>
    <name type="primary">dnaN</name>
</gene>
<evidence type="ECO:0000250" key="1">
    <source>
        <dbReference type="UniProtKB" id="P0A988"/>
    </source>
</evidence>
<evidence type="ECO:0000305" key="2"/>
<comment type="function">
    <text evidence="1">Confers DNA tethering and processivity to DNA polymerases and other proteins. Acts as a clamp, forming a ring around DNA (a reaction catalyzed by the clamp-loading complex) which diffuses in an ATP-independent manner freely and bidirectionally along dsDNA. Initially characterized for its ability to contact the catalytic subunit of DNA polymerase III (Pol III), a complex, multichain enzyme responsible for most of the replicative synthesis in bacteria; Pol III exhibits 3'-5' exonuclease proofreading activity. The beta chain is required for initiation of replication as well as for processivity of DNA replication.</text>
</comment>
<comment type="subunit">
    <text evidence="1">Forms a ring-shaped head-to-tail homodimer around DNA which binds and tethers DNA polymerases and other proteins to the DNA. The DNA replisome complex has a single clamp-loading complex (3 tau and 1 each of delta, delta', psi and chi subunits) which binds 3 Pol III cores (1 core on the leading strand and 2 on the lagging strand) each with a beta sliding clamp dimer. Additional proteins in the replisome are other copies of gamma, psi and chi, Ssb, DNA helicase and RNA primase.</text>
</comment>
<comment type="subcellular location">
    <subcellularLocation>
        <location evidence="1">Cytoplasm</location>
    </subcellularLocation>
</comment>
<comment type="similarity">
    <text evidence="2">Belongs to the beta sliding clamp family.</text>
</comment>
<accession>P24701</accession>
<dbReference type="EMBL" id="X63626">
    <property type="protein sequence ID" value="CAA45172.1"/>
    <property type="molecule type" value="Genomic_DNA"/>
</dbReference>
<dbReference type="PIR" id="S22813">
    <property type="entry name" value="S22813"/>
</dbReference>
<dbReference type="SMR" id="P24701"/>
<dbReference type="GO" id="GO:0005737">
    <property type="term" value="C:cytoplasm"/>
    <property type="evidence" value="ECO:0007669"/>
    <property type="project" value="UniProtKB-SubCell"/>
</dbReference>
<dbReference type="GO" id="GO:0009360">
    <property type="term" value="C:DNA polymerase III complex"/>
    <property type="evidence" value="ECO:0007669"/>
    <property type="project" value="InterPro"/>
</dbReference>
<dbReference type="GO" id="GO:0008408">
    <property type="term" value="F:3'-5' exonuclease activity"/>
    <property type="evidence" value="ECO:0007669"/>
    <property type="project" value="InterPro"/>
</dbReference>
<dbReference type="GO" id="GO:0003677">
    <property type="term" value="F:DNA binding"/>
    <property type="evidence" value="ECO:0007669"/>
    <property type="project" value="UniProtKB-KW"/>
</dbReference>
<dbReference type="GO" id="GO:0003887">
    <property type="term" value="F:DNA-directed DNA polymerase activity"/>
    <property type="evidence" value="ECO:0007669"/>
    <property type="project" value="UniProtKB-KW"/>
</dbReference>
<dbReference type="GO" id="GO:0006271">
    <property type="term" value="P:DNA strand elongation involved in DNA replication"/>
    <property type="evidence" value="ECO:0007669"/>
    <property type="project" value="TreeGrafter"/>
</dbReference>
<dbReference type="Gene3D" id="3.10.150.10">
    <property type="entry name" value="DNA Polymerase III, subunit A, domain 2"/>
    <property type="match status" value="1"/>
</dbReference>
<dbReference type="InterPro" id="IPR046938">
    <property type="entry name" value="DNA_clamp_sf"/>
</dbReference>
<dbReference type="InterPro" id="IPR001001">
    <property type="entry name" value="DNA_polIII_beta"/>
</dbReference>
<dbReference type="InterPro" id="IPR022635">
    <property type="entry name" value="DNA_polIII_beta_C"/>
</dbReference>
<dbReference type="PANTHER" id="PTHR30478:SF0">
    <property type="entry name" value="BETA SLIDING CLAMP"/>
    <property type="match status" value="1"/>
</dbReference>
<dbReference type="PANTHER" id="PTHR30478">
    <property type="entry name" value="DNA POLYMERASE III SUBUNIT BETA"/>
    <property type="match status" value="1"/>
</dbReference>
<dbReference type="Pfam" id="PF02768">
    <property type="entry name" value="DNA_pol3_beta_3"/>
    <property type="match status" value="1"/>
</dbReference>
<dbReference type="SUPFAM" id="SSF55979">
    <property type="entry name" value="DNA clamp"/>
    <property type="match status" value="1"/>
</dbReference>
<proteinExistence type="inferred from homology"/>
<protein>
    <recommendedName>
        <fullName>Beta sliding clamp</fullName>
        <shortName>Beta clamp</shortName>
        <shortName>Sliding clamp</shortName>
    </recommendedName>
    <alternativeName>
        <fullName>Beta-clamp processivity factor</fullName>
    </alternativeName>
    <alternativeName>
        <fullName>DNA polymerase III beta sliding clamp subunit</fullName>
    </alternativeName>
    <alternativeName>
        <fullName>DNA polymerase III subunit beta</fullName>
    </alternativeName>
</protein>
<reference key="1">
    <citation type="journal article" date="1992" name="Nucleic Acids Res.">
        <title>recF in Actinobacillus pleuropneumoniae.</title>
        <authorList>
            <person name="Loynds B.M."/>
            <person name="Langford P.R."/>
            <person name="Kroll J.S."/>
        </authorList>
    </citation>
    <scope>NUCLEOTIDE SEQUENCE [GENOMIC DNA]</scope>
    <source>
        <strain>Serotype III / Isolate 1421 (Nielsen)</strain>
    </source>
</reference>
<keyword id="KW-0963">Cytoplasm</keyword>
<keyword id="KW-0235">DNA replication</keyword>
<keyword id="KW-0238">DNA-binding</keyword>
<keyword id="KW-0239">DNA-directed DNA polymerase</keyword>
<keyword id="KW-0548">Nucleotidyltransferase</keyword>
<keyword id="KW-0808">Transferase</keyword>
<feature type="chain" id="PRO_0000105421" description="Beta sliding clamp">
    <location>
        <begin position="1" status="less than"/>
        <end position="64"/>
    </location>
</feature>
<feature type="non-terminal residue">
    <location>
        <position position="1"/>
    </location>
</feature>
<sequence>EEIIDVAYQSPEMEVGFNVSYLLDVLNTLKCERVRFNLVDASSSCLIEDCDNSTAEYVIMPMRL</sequence>